<proteinExistence type="inferred from homology"/>
<evidence type="ECO:0000255" key="1">
    <source>
        <dbReference type="HAMAP-Rule" id="MF_00001"/>
    </source>
</evidence>
<sequence length="311" mass="34615">MSVVNNRVALTNLVSMEALTTEEVLGLINRGSEYKAGKVVISDHQKDLVANLFFENSTRTHKSFEVAEKKLGLTVLDFNADASAVNKGESLYDTVLTMSALGTDICVIRHPEDDYYKELVESPTITASIVNGGDGSGQHPSQCLLDLLTIYEEFGRFEGLKIAIAGDLTHSRVAKSNMQILKRLGAELYFYGPEEWYSEAFNAYGTYIAIDQIIKELDVLMLLRVQHERHDGHQSFSKEGYHQAFGLTQERYQQLKDSAIIMHPAPVNRDVEIADSLVEAPKARIVSQMANGVFVRMAIIEAILNGRNKNS</sequence>
<protein>
    <recommendedName>
        <fullName evidence="1">Aspartate carbamoyltransferase catalytic subunit</fullName>
        <ecNumber evidence="1">2.1.3.2</ecNumber>
    </recommendedName>
    <alternativeName>
        <fullName evidence="1">Aspartate transcarbamylase</fullName>
        <shortName evidence="1">ATCase</shortName>
    </alternativeName>
</protein>
<reference key="1">
    <citation type="journal article" date="2001" name="Proc. Natl. Acad. Sci. U.S.A.">
        <title>Complete genome sequence of an M1 strain of Streptococcus pyogenes.</title>
        <authorList>
            <person name="Ferretti J.J."/>
            <person name="McShan W.M."/>
            <person name="Ajdic D.J."/>
            <person name="Savic D.J."/>
            <person name="Savic G."/>
            <person name="Lyon K."/>
            <person name="Primeaux C."/>
            <person name="Sezate S."/>
            <person name="Suvorov A.N."/>
            <person name="Kenton S."/>
            <person name="Lai H.S."/>
            <person name="Lin S.P."/>
            <person name="Qian Y."/>
            <person name="Jia H.G."/>
            <person name="Najar F.Z."/>
            <person name="Ren Q."/>
            <person name="Zhu H."/>
            <person name="Song L."/>
            <person name="White J."/>
            <person name="Yuan X."/>
            <person name="Clifton S.W."/>
            <person name="Roe B.A."/>
            <person name="McLaughlin R.E."/>
        </authorList>
    </citation>
    <scope>NUCLEOTIDE SEQUENCE [LARGE SCALE GENOMIC DNA]</scope>
    <source>
        <strain>ATCC 700294 / SF370 / Serotype M1</strain>
    </source>
</reference>
<reference key="2">
    <citation type="journal article" date="2005" name="J. Infect. Dis.">
        <title>Evolutionary origin and emergence of a highly successful clone of serotype M1 group A Streptococcus involved multiple horizontal gene transfer events.</title>
        <authorList>
            <person name="Sumby P."/>
            <person name="Porcella S.F."/>
            <person name="Madrigal A.G."/>
            <person name="Barbian K.D."/>
            <person name="Virtaneva K."/>
            <person name="Ricklefs S.M."/>
            <person name="Sturdevant D.E."/>
            <person name="Graham M.R."/>
            <person name="Vuopio-Varkila J."/>
            <person name="Hoe N.P."/>
            <person name="Musser J.M."/>
        </authorList>
    </citation>
    <scope>NUCLEOTIDE SEQUENCE [LARGE SCALE GENOMIC DNA]</scope>
    <source>
        <strain>ATCC BAA-947 / MGAS5005 / Serotype M1</strain>
    </source>
</reference>
<dbReference type="EC" id="2.1.3.2" evidence="1"/>
<dbReference type="EMBL" id="AE004092">
    <property type="protein sequence ID" value="AAK33763.1"/>
    <property type="molecule type" value="Genomic_DNA"/>
</dbReference>
<dbReference type="EMBL" id="CP000017">
    <property type="protein sequence ID" value="AAZ51259.1"/>
    <property type="molecule type" value="Genomic_DNA"/>
</dbReference>
<dbReference type="RefSeq" id="NP_269042.1">
    <property type="nucleotide sequence ID" value="NC_002737.2"/>
</dbReference>
<dbReference type="SMR" id="P65620"/>
<dbReference type="PaxDb" id="1314-HKU360_00655"/>
<dbReference type="KEGG" id="spy:SPy_0832"/>
<dbReference type="KEGG" id="spz:M5005_Spy0641"/>
<dbReference type="PATRIC" id="fig|160490.10.peg.710"/>
<dbReference type="HOGENOM" id="CLU_043846_2_1_9"/>
<dbReference type="OMA" id="VLIMHPG"/>
<dbReference type="UniPathway" id="UPA00070">
    <property type="reaction ID" value="UER00116"/>
</dbReference>
<dbReference type="Proteomes" id="UP000000750">
    <property type="component" value="Chromosome"/>
</dbReference>
<dbReference type="GO" id="GO:0005829">
    <property type="term" value="C:cytosol"/>
    <property type="evidence" value="ECO:0007669"/>
    <property type="project" value="TreeGrafter"/>
</dbReference>
<dbReference type="GO" id="GO:0016597">
    <property type="term" value="F:amino acid binding"/>
    <property type="evidence" value="ECO:0007669"/>
    <property type="project" value="InterPro"/>
</dbReference>
<dbReference type="GO" id="GO:0004070">
    <property type="term" value="F:aspartate carbamoyltransferase activity"/>
    <property type="evidence" value="ECO:0007669"/>
    <property type="project" value="UniProtKB-UniRule"/>
</dbReference>
<dbReference type="GO" id="GO:0006207">
    <property type="term" value="P:'de novo' pyrimidine nucleobase biosynthetic process"/>
    <property type="evidence" value="ECO:0007669"/>
    <property type="project" value="InterPro"/>
</dbReference>
<dbReference type="GO" id="GO:0044205">
    <property type="term" value="P:'de novo' UMP biosynthetic process"/>
    <property type="evidence" value="ECO:0007669"/>
    <property type="project" value="UniProtKB-UniRule"/>
</dbReference>
<dbReference type="GO" id="GO:0006520">
    <property type="term" value="P:amino acid metabolic process"/>
    <property type="evidence" value="ECO:0007669"/>
    <property type="project" value="InterPro"/>
</dbReference>
<dbReference type="FunFam" id="3.40.50.1370:FF:000011">
    <property type="entry name" value="Aspartate carbamoyltransferase"/>
    <property type="match status" value="1"/>
</dbReference>
<dbReference type="Gene3D" id="3.40.50.1370">
    <property type="entry name" value="Aspartate/ornithine carbamoyltransferase"/>
    <property type="match status" value="2"/>
</dbReference>
<dbReference type="HAMAP" id="MF_00001">
    <property type="entry name" value="Asp_carb_tr"/>
    <property type="match status" value="1"/>
</dbReference>
<dbReference type="InterPro" id="IPR006132">
    <property type="entry name" value="Asp/Orn_carbamoyltranf_P-bd"/>
</dbReference>
<dbReference type="InterPro" id="IPR006130">
    <property type="entry name" value="Asp/Orn_carbamoylTrfase"/>
</dbReference>
<dbReference type="InterPro" id="IPR036901">
    <property type="entry name" value="Asp/Orn_carbamoylTrfase_sf"/>
</dbReference>
<dbReference type="InterPro" id="IPR002082">
    <property type="entry name" value="Asp_carbamoyltransf"/>
</dbReference>
<dbReference type="InterPro" id="IPR006131">
    <property type="entry name" value="Asp_carbamoyltransf_Asp/Orn-bd"/>
</dbReference>
<dbReference type="NCBIfam" id="TIGR00670">
    <property type="entry name" value="asp_carb_tr"/>
    <property type="match status" value="1"/>
</dbReference>
<dbReference type="NCBIfam" id="NF002032">
    <property type="entry name" value="PRK00856.1"/>
    <property type="match status" value="1"/>
</dbReference>
<dbReference type="PANTHER" id="PTHR45753:SF6">
    <property type="entry name" value="ASPARTATE CARBAMOYLTRANSFERASE"/>
    <property type="match status" value="1"/>
</dbReference>
<dbReference type="PANTHER" id="PTHR45753">
    <property type="entry name" value="ORNITHINE CARBAMOYLTRANSFERASE, MITOCHONDRIAL"/>
    <property type="match status" value="1"/>
</dbReference>
<dbReference type="Pfam" id="PF00185">
    <property type="entry name" value="OTCace"/>
    <property type="match status" value="1"/>
</dbReference>
<dbReference type="Pfam" id="PF02729">
    <property type="entry name" value="OTCace_N"/>
    <property type="match status" value="1"/>
</dbReference>
<dbReference type="PRINTS" id="PR00100">
    <property type="entry name" value="AOTCASE"/>
</dbReference>
<dbReference type="PRINTS" id="PR00101">
    <property type="entry name" value="ATCASE"/>
</dbReference>
<dbReference type="SUPFAM" id="SSF53671">
    <property type="entry name" value="Aspartate/ornithine carbamoyltransferase"/>
    <property type="match status" value="1"/>
</dbReference>
<dbReference type="PROSITE" id="PS00097">
    <property type="entry name" value="CARBAMOYLTRANSFERASE"/>
    <property type="match status" value="1"/>
</dbReference>
<gene>
    <name evidence="1" type="primary">pyrB</name>
    <name type="ordered locus">SPy_0832</name>
    <name type="ordered locus">M5005_Spy0641</name>
</gene>
<keyword id="KW-0665">Pyrimidine biosynthesis</keyword>
<keyword id="KW-1185">Reference proteome</keyword>
<keyword id="KW-0808">Transferase</keyword>
<name>PYRB_STRP1</name>
<organism>
    <name type="scientific">Streptococcus pyogenes serotype M1</name>
    <dbReference type="NCBI Taxonomy" id="301447"/>
    <lineage>
        <taxon>Bacteria</taxon>
        <taxon>Bacillati</taxon>
        <taxon>Bacillota</taxon>
        <taxon>Bacilli</taxon>
        <taxon>Lactobacillales</taxon>
        <taxon>Streptococcaceae</taxon>
        <taxon>Streptococcus</taxon>
    </lineage>
</organism>
<comment type="function">
    <text evidence="1">Catalyzes the condensation of carbamoyl phosphate and aspartate to form carbamoyl aspartate and inorganic phosphate, the committed step in the de novo pyrimidine nucleotide biosynthesis pathway.</text>
</comment>
<comment type="catalytic activity">
    <reaction evidence="1">
        <text>carbamoyl phosphate + L-aspartate = N-carbamoyl-L-aspartate + phosphate + H(+)</text>
        <dbReference type="Rhea" id="RHEA:20013"/>
        <dbReference type="ChEBI" id="CHEBI:15378"/>
        <dbReference type="ChEBI" id="CHEBI:29991"/>
        <dbReference type="ChEBI" id="CHEBI:32814"/>
        <dbReference type="ChEBI" id="CHEBI:43474"/>
        <dbReference type="ChEBI" id="CHEBI:58228"/>
        <dbReference type="EC" id="2.1.3.2"/>
    </reaction>
</comment>
<comment type="pathway">
    <text evidence="1">Pyrimidine metabolism; UMP biosynthesis via de novo pathway; (S)-dihydroorotate from bicarbonate: step 2/3.</text>
</comment>
<comment type="subunit">
    <text evidence="1">Heterododecamer (2C3:3R2) of six catalytic PyrB chains organized as two trimers (C3), and six regulatory PyrI chains organized as three dimers (R2).</text>
</comment>
<comment type="similarity">
    <text evidence="1">Belongs to the aspartate/ornithine carbamoyltransferase superfamily. ATCase family.</text>
</comment>
<feature type="chain" id="PRO_0000113208" description="Aspartate carbamoyltransferase catalytic subunit">
    <location>
        <begin position="1"/>
        <end position="311"/>
    </location>
</feature>
<feature type="binding site" evidence="1">
    <location>
        <position position="59"/>
    </location>
    <ligand>
        <name>carbamoyl phosphate</name>
        <dbReference type="ChEBI" id="CHEBI:58228"/>
    </ligand>
</feature>
<feature type="binding site" evidence="1">
    <location>
        <position position="60"/>
    </location>
    <ligand>
        <name>carbamoyl phosphate</name>
        <dbReference type="ChEBI" id="CHEBI:58228"/>
    </ligand>
</feature>
<feature type="binding site" evidence="1">
    <location>
        <position position="87"/>
    </location>
    <ligand>
        <name>L-aspartate</name>
        <dbReference type="ChEBI" id="CHEBI:29991"/>
    </ligand>
</feature>
<feature type="binding site" evidence="1">
    <location>
        <position position="109"/>
    </location>
    <ligand>
        <name>carbamoyl phosphate</name>
        <dbReference type="ChEBI" id="CHEBI:58228"/>
    </ligand>
</feature>
<feature type="binding site" evidence="1">
    <location>
        <position position="139"/>
    </location>
    <ligand>
        <name>carbamoyl phosphate</name>
        <dbReference type="ChEBI" id="CHEBI:58228"/>
    </ligand>
</feature>
<feature type="binding site" evidence="1">
    <location>
        <position position="142"/>
    </location>
    <ligand>
        <name>carbamoyl phosphate</name>
        <dbReference type="ChEBI" id="CHEBI:58228"/>
    </ligand>
</feature>
<feature type="binding site" evidence="1">
    <location>
        <position position="172"/>
    </location>
    <ligand>
        <name>L-aspartate</name>
        <dbReference type="ChEBI" id="CHEBI:29991"/>
    </ligand>
</feature>
<feature type="binding site" evidence="1">
    <location>
        <position position="224"/>
    </location>
    <ligand>
        <name>L-aspartate</name>
        <dbReference type="ChEBI" id="CHEBI:29991"/>
    </ligand>
</feature>
<feature type="binding site" evidence="1">
    <location>
        <position position="265"/>
    </location>
    <ligand>
        <name>carbamoyl phosphate</name>
        <dbReference type="ChEBI" id="CHEBI:58228"/>
    </ligand>
</feature>
<feature type="binding site" evidence="1">
    <location>
        <position position="266"/>
    </location>
    <ligand>
        <name>carbamoyl phosphate</name>
        <dbReference type="ChEBI" id="CHEBI:58228"/>
    </ligand>
</feature>
<accession>P65620</accession>
<accession>Q48ZF9</accession>
<accession>Q9A0C8</accession>